<dbReference type="EC" id="4.6.1.1" evidence="15"/>
<dbReference type="EMBL" id="U12919">
    <property type="protein sequence ID" value="AAA57554.1"/>
    <property type="molecule type" value="mRNA"/>
</dbReference>
<dbReference type="EMBL" id="AK154652">
    <property type="protein sequence ID" value="BAE32743.1"/>
    <property type="molecule type" value="mRNA"/>
</dbReference>
<dbReference type="CCDS" id="CCDS22509.1"/>
<dbReference type="PIR" id="A55405">
    <property type="entry name" value="A55405"/>
</dbReference>
<dbReference type="RefSeq" id="NP_001032812.2">
    <property type="nucleotide sequence ID" value="NM_001037723.3"/>
</dbReference>
<dbReference type="RefSeq" id="NP_001032813.1">
    <property type="nucleotide sequence ID" value="NM_001037724.4"/>
</dbReference>
<dbReference type="RefSeq" id="NP_001103226.1">
    <property type="nucleotide sequence ID" value="NM_001109756.1"/>
</dbReference>
<dbReference type="RefSeq" id="NP_031432.2">
    <property type="nucleotide sequence ID" value="NM_007406.2"/>
</dbReference>
<dbReference type="SMR" id="P51829"/>
<dbReference type="BioGRID" id="197976">
    <property type="interactions" value="4"/>
</dbReference>
<dbReference type="FunCoup" id="P51829">
    <property type="interactions" value="1420"/>
</dbReference>
<dbReference type="STRING" id="10090.ENSMUSP00000132528"/>
<dbReference type="GlyCosmos" id="P51829">
    <property type="glycosylation" value="1 site, No reported glycans"/>
</dbReference>
<dbReference type="GlyGen" id="P51829">
    <property type="glycosylation" value="2 sites, 1 O-linked glycan (1 site)"/>
</dbReference>
<dbReference type="iPTMnet" id="P51829"/>
<dbReference type="PhosphoSitePlus" id="P51829"/>
<dbReference type="SwissPalm" id="P51829"/>
<dbReference type="PaxDb" id="10090-ENSMUSP00000130594"/>
<dbReference type="PeptideAtlas" id="P51829"/>
<dbReference type="ProteomicsDB" id="285764"/>
<dbReference type="Antibodypedia" id="28237">
    <property type="antibodies" value="173 antibodies from 28 providers"/>
</dbReference>
<dbReference type="DNASU" id="11513"/>
<dbReference type="Ensembl" id="ENSMUST00000098521.4">
    <property type="protein sequence ID" value="ENSMUSP00000096122.3"/>
    <property type="gene ID" value="ENSMUSG00000031659.14"/>
</dbReference>
<dbReference type="Ensembl" id="ENSMUST00000168545.8">
    <property type="protein sequence ID" value="ENSMUSP00000129252.2"/>
    <property type="gene ID" value="ENSMUSG00000031659.14"/>
</dbReference>
<dbReference type="Ensembl" id="ENSMUST00000169037.9">
    <property type="protein sequence ID" value="ENSMUSP00000130594.2"/>
    <property type="gene ID" value="ENSMUSG00000031659.14"/>
</dbReference>
<dbReference type="Ensembl" id="ENSMUST00000171456.9">
    <property type="protein sequence ID" value="ENSMUSP00000132528.2"/>
    <property type="gene ID" value="ENSMUSG00000031659.14"/>
</dbReference>
<dbReference type="GeneID" id="11513"/>
<dbReference type="KEGG" id="mmu:11513"/>
<dbReference type="UCSC" id="uc009mrh.2">
    <property type="organism name" value="mouse"/>
</dbReference>
<dbReference type="AGR" id="MGI:102891"/>
<dbReference type="CTD" id="113"/>
<dbReference type="MGI" id="MGI:102891">
    <property type="gene designation" value="Adcy7"/>
</dbReference>
<dbReference type="VEuPathDB" id="HostDB:ENSMUSG00000031659"/>
<dbReference type="eggNOG" id="KOG3619">
    <property type="taxonomic scope" value="Eukaryota"/>
</dbReference>
<dbReference type="GeneTree" id="ENSGT00940000159096"/>
<dbReference type="HOGENOM" id="CLU_001072_2_5_1"/>
<dbReference type="InParanoid" id="P51829"/>
<dbReference type="OMA" id="LIMPKTA"/>
<dbReference type="OrthoDB" id="10035433at2759"/>
<dbReference type="PhylomeDB" id="P51829"/>
<dbReference type="TreeFam" id="TF313845"/>
<dbReference type="BRENDA" id="4.6.1.1">
    <property type="organism ID" value="3474"/>
</dbReference>
<dbReference type="Reactome" id="R-MMU-163615">
    <property type="pathway name" value="PKA activation"/>
</dbReference>
<dbReference type="Reactome" id="R-MMU-170660">
    <property type="pathway name" value="Adenylate cyclase activating pathway"/>
</dbReference>
<dbReference type="Reactome" id="R-MMU-170670">
    <property type="pathway name" value="Adenylate cyclase inhibitory pathway"/>
</dbReference>
<dbReference type="Reactome" id="R-MMU-418597">
    <property type="pathway name" value="G alpha (z) signalling events"/>
</dbReference>
<dbReference type="Reactome" id="R-MMU-5610787">
    <property type="pathway name" value="Hedgehog 'off' state"/>
</dbReference>
<dbReference type="BioGRID-ORCS" id="11513">
    <property type="hits" value="4 hits in 79 CRISPR screens"/>
</dbReference>
<dbReference type="ChiTaRS" id="Adcy7">
    <property type="organism name" value="mouse"/>
</dbReference>
<dbReference type="PRO" id="PR:P51829"/>
<dbReference type="Proteomes" id="UP000000589">
    <property type="component" value="Chromosome 8"/>
</dbReference>
<dbReference type="RNAct" id="P51829">
    <property type="molecule type" value="protein"/>
</dbReference>
<dbReference type="Bgee" id="ENSMUSG00000031659">
    <property type="expression patterns" value="Expressed in peripheral lymph node and 246 other cell types or tissues"/>
</dbReference>
<dbReference type="ExpressionAtlas" id="P51829">
    <property type="expression patterns" value="baseline and differential"/>
</dbReference>
<dbReference type="GO" id="GO:0005886">
    <property type="term" value="C:plasma membrane"/>
    <property type="evidence" value="ECO:0000304"/>
    <property type="project" value="MGI"/>
</dbReference>
<dbReference type="GO" id="GO:0004016">
    <property type="term" value="F:adenylate cyclase activity"/>
    <property type="evidence" value="ECO:0000314"/>
    <property type="project" value="UniProtKB"/>
</dbReference>
<dbReference type="GO" id="GO:0005524">
    <property type="term" value="F:ATP binding"/>
    <property type="evidence" value="ECO:0007669"/>
    <property type="project" value="UniProtKB-KW"/>
</dbReference>
<dbReference type="GO" id="GO:0046872">
    <property type="term" value="F:metal ion binding"/>
    <property type="evidence" value="ECO:0007669"/>
    <property type="project" value="UniProtKB-KW"/>
</dbReference>
<dbReference type="GO" id="GO:0007189">
    <property type="term" value="P:adenylate cyclase-activating G protein-coupled receptor signaling pathway"/>
    <property type="evidence" value="ECO:0007669"/>
    <property type="project" value="Ensembl"/>
</dbReference>
<dbReference type="GO" id="GO:0006171">
    <property type="term" value="P:cAMP biosynthetic process"/>
    <property type="evidence" value="ECO:0000304"/>
    <property type="project" value="MGI"/>
</dbReference>
<dbReference type="GO" id="GO:0071361">
    <property type="term" value="P:cellular response to ethanol"/>
    <property type="evidence" value="ECO:0000250"/>
    <property type="project" value="UniProtKB"/>
</dbReference>
<dbReference type="GO" id="GO:0071285">
    <property type="term" value="P:cellular response to lithium ion"/>
    <property type="evidence" value="ECO:0000314"/>
    <property type="project" value="UniProtKB"/>
</dbReference>
<dbReference type="GO" id="GO:0035556">
    <property type="term" value="P:intracellular signal transduction"/>
    <property type="evidence" value="ECO:0007669"/>
    <property type="project" value="InterPro"/>
</dbReference>
<dbReference type="GO" id="GO:0060135">
    <property type="term" value="P:maternal process involved in female pregnancy"/>
    <property type="evidence" value="ECO:0007669"/>
    <property type="project" value="Ensembl"/>
</dbReference>
<dbReference type="GO" id="GO:1900016">
    <property type="term" value="P:negative regulation of cytokine production involved in inflammatory response"/>
    <property type="evidence" value="ECO:0000315"/>
    <property type="project" value="UniProtKB"/>
</dbReference>
<dbReference type="GO" id="GO:0002819">
    <property type="term" value="P:regulation of adaptive immune response"/>
    <property type="evidence" value="ECO:0000315"/>
    <property type="project" value="UniProtKB"/>
</dbReference>
<dbReference type="CDD" id="cd07302">
    <property type="entry name" value="CHD"/>
    <property type="match status" value="2"/>
</dbReference>
<dbReference type="FunFam" id="3.30.70.1230:FF:000003">
    <property type="entry name" value="Adenylate cyclase"/>
    <property type="match status" value="1"/>
</dbReference>
<dbReference type="FunFam" id="3.30.70.1230:FF:000012">
    <property type="entry name" value="Adenylate cyclase"/>
    <property type="match status" value="1"/>
</dbReference>
<dbReference type="Gene3D" id="3.30.70.1230">
    <property type="entry name" value="Nucleotide cyclase"/>
    <property type="match status" value="2"/>
</dbReference>
<dbReference type="InterPro" id="IPR001054">
    <property type="entry name" value="A/G_cyclase"/>
</dbReference>
<dbReference type="InterPro" id="IPR018297">
    <property type="entry name" value="A/G_cyclase_CS"/>
</dbReference>
<dbReference type="InterPro" id="IPR032628">
    <property type="entry name" value="AC_N"/>
</dbReference>
<dbReference type="InterPro" id="IPR030672">
    <property type="entry name" value="Adcy"/>
</dbReference>
<dbReference type="InterPro" id="IPR009398">
    <property type="entry name" value="Adcy_conserved_dom"/>
</dbReference>
<dbReference type="InterPro" id="IPR029787">
    <property type="entry name" value="Nucleotide_cyclase"/>
</dbReference>
<dbReference type="PANTHER" id="PTHR45627">
    <property type="entry name" value="ADENYLATE CYCLASE TYPE 1"/>
    <property type="match status" value="1"/>
</dbReference>
<dbReference type="PANTHER" id="PTHR45627:SF9">
    <property type="entry name" value="ADENYLATE CYCLASE TYPE 7"/>
    <property type="match status" value="1"/>
</dbReference>
<dbReference type="Pfam" id="PF16214">
    <property type="entry name" value="AC_N"/>
    <property type="match status" value="1"/>
</dbReference>
<dbReference type="Pfam" id="PF06327">
    <property type="entry name" value="Adcy_cons_dom"/>
    <property type="match status" value="1"/>
</dbReference>
<dbReference type="Pfam" id="PF00211">
    <property type="entry name" value="Guanylate_cyc"/>
    <property type="match status" value="2"/>
</dbReference>
<dbReference type="PIRSF" id="PIRSF039050">
    <property type="entry name" value="Ade_cyc"/>
    <property type="match status" value="1"/>
</dbReference>
<dbReference type="SMART" id="SM00044">
    <property type="entry name" value="CYCc"/>
    <property type="match status" value="2"/>
</dbReference>
<dbReference type="SUPFAM" id="SSF55073">
    <property type="entry name" value="Nucleotide cyclase"/>
    <property type="match status" value="2"/>
</dbReference>
<dbReference type="PROSITE" id="PS00452">
    <property type="entry name" value="GUANYLATE_CYCLASE_1"/>
    <property type="match status" value="1"/>
</dbReference>
<dbReference type="PROSITE" id="PS50125">
    <property type="entry name" value="GUANYLATE_CYCLASE_2"/>
    <property type="match status" value="2"/>
</dbReference>
<sequence>MPAKGRYFLNEGDEGPDQAALYEKYRLTSLHGPLLLLLLLVAAATCIALISIAFSHEDLRRHQVVLGTAFLMLTLFVALYVLVYVECLVQRWLRALALLTWACLMVLGSVLMWDSLENEAHAWEQVPFFLFVVFVVYALLPLSRRAAIVAGVTSTVSHLLVFGAVTRAFQTSMSSTQLGLQLLANAVILLGGNFTGAFHKHQLQDASRDLFIYTVKCIQIRRKLRVEKRQQENLLLSVLPAHISMGMKLAIIERLKEGGDRHYMPDNNFHSLYVKRHQNVSILYADIVGFTRLASDCSPKELVVVLNELFGKFDQIAKANECMRIKILGDCYYCVSGLPVSLPTHARNCVKMGLDICEAIKQVREATGVDISMRVGIHSGNVLCGVIGLRKWQYDVWSHDVSLANRMEAAGVPGRVHITEATLNHLDKAYEVEDGHGEQRDPYLKEMNIRTYLVIDPRSQQPPPPSHHLSKPKGDATLKMRASVRVTRYLESWGAARPFAHLNHRESVSSSETPISNGRRQKAIPLRRHRAPDRSASPKGRLEDDCDDEMLSAIEGLSSTRPCCSKSDDFHTFGPIFLEKGFEREYRLVPIPRARYDFACASLVFVCILLVHLLVMPRMATLGVSFGLVACLLGLVLSFCFATEFSRCFPSRSTLQAISESVETQPLVRLVLVVLTVGSLLTVAIINMPLTLNPGPEQPGDNKTSPLAAQNRVGTPCELLPYYTCSCILGFIACSVFLRMSLELKAMLLTVALVAYLLLFNLSPCWHVSGNSTETNGTQRTRLLLSDAQSMPSHTLAPGARETAPSPSYLERDLKIMVNFYLILFYATLILLSRQIDYYCRLDCLWKKKFKKEHEEFETMENVNRLLLENVLPAHVAAHFIGDKAAEDWYHQSYDCVCVMFASVPDFKVFYTECDVNKEGLECLRLLNEIIADFDELLLKPKFSGVEKIKTIGSTYMAAAGLSAPSGHENQDLERKHVHIGVLVEFSMALMSKLDGINRHSFNSFRLRVGINHGPVIAGVIGARKPQYDIWGNTVNVASRMESTGELGKIQVTEETCTILQGLGYSCECRGLINVKGKGELRTYFVCTDTAKFQGLGLN</sequence>
<proteinExistence type="evidence at protein level"/>
<reference key="1">
    <citation type="journal article" date="1994" name="J. Biol. Chem.">
        <title>Molecular cloning and characterization of the type VII isoform of mammalian adenylyl cyclase expressed widely in mouse tissues and in S49 mouse lymphoma cells.</title>
        <authorList>
            <person name="Watson P.A."/>
            <person name="Krupinski J."/>
            <person name="Kempinski A.M."/>
            <person name="Frankenfield C.D."/>
        </authorList>
    </citation>
    <scope>NUCLEOTIDE SEQUENCE [MRNA]</scope>
    <scope>TISSUE SPECIFICITY</scope>
    <source>
        <tissue>Lymphoma</tissue>
    </source>
</reference>
<reference key="2">
    <citation type="journal article" date="2005" name="Science">
        <title>The transcriptional landscape of the mammalian genome.</title>
        <authorList>
            <person name="Carninci P."/>
            <person name="Kasukawa T."/>
            <person name="Katayama S."/>
            <person name="Gough J."/>
            <person name="Frith M.C."/>
            <person name="Maeda N."/>
            <person name="Oyama R."/>
            <person name="Ravasi T."/>
            <person name="Lenhard B."/>
            <person name="Wells C."/>
            <person name="Kodzius R."/>
            <person name="Shimokawa K."/>
            <person name="Bajic V.B."/>
            <person name="Brenner S.E."/>
            <person name="Batalov S."/>
            <person name="Forrest A.R."/>
            <person name="Zavolan M."/>
            <person name="Davis M.J."/>
            <person name="Wilming L.G."/>
            <person name="Aidinis V."/>
            <person name="Allen J.E."/>
            <person name="Ambesi-Impiombato A."/>
            <person name="Apweiler R."/>
            <person name="Aturaliya R.N."/>
            <person name="Bailey T.L."/>
            <person name="Bansal M."/>
            <person name="Baxter L."/>
            <person name="Beisel K.W."/>
            <person name="Bersano T."/>
            <person name="Bono H."/>
            <person name="Chalk A.M."/>
            <person name="Chiu K.P."/>
            <person name="Choudhary V."/>
            <person name="Christoffels A."/>
            <person name="Clutterbuck D.R."/>
            <person name="Crowe M.L."/>
            <person name="Dalla E."/>
            <person name="Dalrymple B.P."/>
            <person name="de Bono B."/>
            <person name="Della Gatta G."/>
            <person name="di Bernardo D."/>
            <person name="Down T."/>
            <person name="Engstrom P."/>
            <person name="Fagiolini M."/>
            <person name="Faulkner G."/>
            <person name="Fletcher C.F."/>
            <person name="Fukushima T."/>
            <person name="Furuno M."/>
            <person name="Futaki S."/>
            <person name="Gariboldi M."/>
            <person name="Georgii-Hemming P."/>
            <person name="Gingeras T.R."/>
            <person name="Gojobori T."/>
            <person name="Green R.E."/>
            <person name="Gustincich S."/>
            <person name="Harbers M."/>
            <person name="Hayashi Y."/>
            <person name="Hensch T.K."/>
            <person name="Hirokawa N."/>
            <person name="Hill D."/>
            <person name="Huminiecki L."/>
            <person name="Iacono M."/>
            <person name="Ikeo K."/>
            <person name="Iwama A."/>
            <person name="Ishikawa T."/>
            <person name="Jakt M."/>
            <person name="Kanapin A."/>
            <person name="Katoh M."/>
            <person name="Kawasawa Y."/>
            <person name="Kelso J."/>
            <person name="Kitamura H."/>
            <person name="Kitano H."/>
            <person name="Kollias G."/>
            <person name="Krishnan S.P."/>
            <person name="Kruger A."/>
            <person name="Kummerfeld S.K."/>
            <person name="Kurochkin I.V."/>
            <person name="Lareau L.F."/>
            <person name="Lazarevic D."/>
            <person name="Lipovich L."/>
            <person name="Liu J."/>
            <person name="Liuni S."/>
            <person name="McWilliam S."/>
            <person name="Madan Babu M."/>
            <person name="Madera M."/>
            <person name="Marchionni L."/>
            <person name="Matsuda H."/>
            <person name="Matsuzawa S."/>
            <person name="Miki H."/>
            <person name="Mignone F."/>
            <person name="Miyake S."/>
            <person name="Morris K."/>
            <person name="Mottagui-Tabar S."/>
            <person name="Mulder N."/>
            <person name="Nakano N."/>
            <person name="Nakauchi H."/>
            <person name="Ng P."/>
            <person name="Nilsson R."/>
            <person name="Nishiguchi S."/>
            <person name="Nishikawa S."/>
            <person name="Nori F."/>
            <person name="Ohara O."/>
            <person name="Okazaki Y."/>
            <person name="Orlando V."/>
            <person name="Pang K.C."/>
            <person name="Pavan W.J."/>
            <person name="Pavesi G."/>
            <person name="Pesole G."/>
            <person name="Petrovsky N."/>
            <person name="Piazza S."/>
            <person name="Reed J."/>
            <person name="Reid J.F."/>
            <person name="Ring B.Z."/>
            <person name="Ringwald M."/>
            <person name="Rost B."/>
            <person name="Ruan Y."/>
            <person name="Salzberg S.L."/>
            <person name="Sandelin A."/>
            <person name="Schneider C."/>
            <person name="Schoenbach C."/>
            <person name="Sekiguchi K."/>
            <person name="Semple C.A."/>
            <person name="Seno S."/>
            <person name="Sessa L."/>
            <person name="Sheng Y."/>
            <person name="Shibata Y."/>
            <person name="Shimada H."/>
            <person name="Shimada K."/>
            <person name="Silva D."/>
            <person name="Sinclair B."/>
            <person name="Sperling S."/>
            <person name="Stupka E."/>
            <person name="Sugiura K."/>
            <person name="Sultana R."/>
            <person name="Takenaka Y."/>
            <person name="Taki K."/>
            <person name="Tammoja K."/>
            <person name="Tan S.L."/>
            <person name="Tang S."/>
            <person name="Taylor M.S."/>
            <person name="Tegner J."/>
            <person name="Teichmann S.A."/>
            <person name="Ueda H.R."/>
            <person name="van Nimwegen E."/>
            <person name="Verardo R."/>
            <person name="Wei C.L."/>
            <person name="Yagi K."/>
            <person name="Yamanishi H."/>
            <person name="Zabarovsky E."/>
            <person name="Zhu S."/>
            <person name="Zimmer A."/>
            <person name="Hide W."/>
            <person name="Bult C."/>
            <person name="Grimmond S.M."/>
            <person name="Teasdale R.D."/>
            <person name="Liu E.T."/>
            <person name="Brusic V."/>
            <person name="Quackenbush J."/>
            <person name="Wahlestedt C."/>
            <person name="Mattick J.S."/>
            <person name="Hume D.A."/>
            <person name="Kai C."/>
            <person name="Sasaki D."/>
            <person name="Tomaru Y."/>
            <person name="Fukuda S."/>
            <person name="Kanamori-Katayama M."/>
            <person name="Suzuki M."/>
            <person name="Aoki J."/>
            <person name="Arakawa T."/>
            <person name="Iida J."/>
            <person name="Imamura K."/>
            <person name="Itoh M."/>
            <person name="Kato T."/>
            <person name="Kawaji H."/>
            <person name="Kawagashira N."/>
            <person name="Kawashima T."/>
            <person name="Kojima M."/>
            <person name="Kondo S."/>
            <person name="Konno H."/>
            <person name="Nakano K."/>
            <person name="Ninomiya N."/>
            <person name="Nishio T."/>
            <person name="Okada M."/>
            <person name="Plessy C."/>
            <person name="Shibata K."/>
            <person name="Shiraki T."/>
            <person name="Suzuki S."/>
            <person name="Tagami M."/>
            <person name="Waki K."/>
            <person name="Watahiki A."/>
            <person name="Okamura-Oho Y."/>
            <person name="Suzuki H."/>
            <person name="Kawai J."/>
            <person name="Hayashizaki Y."/>
        </authorList>
    </citation>
    <scope>NUCLEOTIDE SEQUENCE [LARGE SCALE MRNA]</scope>
    <source>
        <strain>NOD</strain>
    </source>
</reference>
<reference key="3">
    <citation type="journal article" date="2008" name="Int. J. Neuropsychopharmacol.">
        <title>Lithium preferentially inhibits adenylyl cyclase V and VII isoforms.</title>
        <authorList>
            <person name="Mann L."/>
            <person name="Heldman E."/>
            <person name="Shaltiel G."/>
            <person name="Belmaker R.H."/>
            <person name="Agam G."/>
        </authorList>
    </citation>
    <scope>ACTIVITY REGULATION</scope>
</reference>
<reference key="4">
    <citation type="journal article" date="2008" name="J. Biol. Chem.">
        <title>Regulation of cAMP responses by the G12/13 pathway converges on adenylyl cyclase VII.</title>
        <authorList>
            <person name="Jiang L.I."/>
            <person name="Collins J."/>
            <person name="Davis R."/>
            <person name="Fraser I.D."/>
            <person name="Sternweis P.C."/>
        </authorList>
    </citation>
    <scope>FUNCTION</scope>
</reference>
<reference key="5">
    <citation type="journal article" date="2010" name="J. Immunol.">
        <title>Distinct roles of adenylyl cyclase VII in regulating the immune responses in mice.</title>
        <authorList>
            <person name="Duan B."/>
            <person name="Davis R."/>
            <person name="Sadat E.L."/>
            <person name="Collins J."/>
            <person name="Sternweis P.C."/>
            <person name="Yuan D."/>
            <person name="Jiang L.I."/>
        </authorList>
    </citation>
    <scope>DISRUPTION PHENOTYPE</scope>
    <scope>FUNCTION</scope>
</reference>
<reference key="6">
    <citation type="journal article" date="2013" name="Mol. Immunol.">
        <title>Zymosan activates protein kinase A via adenylyl cyclase VII to modulate innate immune responses during inflammation.</title>
        <authorList>
            <person name="Jiang L.I."/>
            <person name="Sternweis P.C."/>
            <person name="Wang J.E."/>
        </authorList>
    </citation>
    <scope>FUNCTION</scope>
</reference>
<reference key="7">
    <citation type="journal article" date="2013" name="Mol. Pharmacol.">
        <title>Regions on adenylyl cyclase VII required for selective regulation by the G13 pathway.</title>
        <authorList>
            <person name="Jiang L.I."/>
            <person name="Wang J.E."/>
            <person name="Sternweis P.C."/>
        </authorList>
    </citation>
    <scope>FUNCTION</scope>
    <scope>CATALYTIC ACTIVITY</scope>
</reference>
<comment type="function">
    <text evidence="3 8 9 10 13 14 15">Catalyzes the formation of cAMP in response to activation of G protein-coupled receptors (Probable). Functions in signaling cascades activated namely by thrombin and sphingosine 1-phosphate and mediates regulation of cAMP synthesis through synergistic action of the stimulatory G alpha protein with GNA13 (PubMed:18541530). Also, during inflammation, mediates zymosan-induced increase intracellular cAMP, leading to protein kinase A pathway activation in order to modulate innate immune responses through heterotrimeric G proteins G(12/13) (PubMed:23178822). Functions in signaling cascades activated namely by dopamine and C5 alpha chain and mediates regulation of cAMP synthesis through synergistic action of the stimulatory G protein with G beta:gamma complex (By similarity). Functions, through cAMP response regulation, to keep inflammation under control during bacterial infection by sensing the presence of serum factors, such as the bioactive lysophospholipid (LPA) that regulate LPS-induced TNF-alpha production. However, it is also required for the optimal functions of B and T cells during adaptive immune responses by regulating cAMP synthesis in both B and T cells (PubMed:20505140).</text>
</comment>
<comment type="catalytic activity">
    <reaction evidence="15">
        <text>ATP = 3',5'-cyclic AMP + diphosphate</text>
        <dbReference type="Rhea" id="RHEA:15389"/>
        <dbReference type="ChEBI" id="CHEBI:30616"/>
        <dbReference type="ChEBI" id="CHEBI:33019"/>
        <dbReference type="ChEBI" id="CHEBI:58165"/>
        <dbReference type="EC" id="4.6.1.1"/>
    </reaction>
</comment>
<comment type="cofactor">
    <cofactor evidence="2">
        <name>Mg(2+)</name>
        <dbReference type="ChEBI" id="CHEBI:18420"/>
    </cofactor>
    <cofactor evidence="2">
        <name>Mn(2+)</name>
        <dbReference type="ChEBI" id="CHEBI:29035"/>
    </cofactor>
    <text evidence="2">Binds 2 magnesium ions per subunit. Is also active with manganese (in vitro).</text>
</comment>
<comment type="activity regulation">
    <text evidence="3 7">Activated by the G protein alpha subunit. Activated by the G protein beta and gamma subunit complex. Activated by GNA13 and GNA12. Ethanol and phorbol 12,13-dibutanoate significantly potentiate adenylate cyclase activity generated in response to the activation of the prostanoid receptor by the agonist prostaglandin E1(1-) in a PKC-dependent manner (By similarity). Inhibited by lithium (PubMed:18205980).</text>
</comment>
<comment type="subcellular location">
    <subcellularLocation>
        <location>Membrane</location>
        <topology>Multi-pass membrane protein</topology>
    </subcellularLocation>
</comment>
<comment type="tissue specificity">
    <text evidence="11">Most abundant in heart, spleen and lung.</text>
</comment>
<comment type="domain">
    <text evidence="1">The protein contains two modules with six transmembrane helices each; both are required for catalytic activity. Isolated N-terminal or C-terminal guanylate cyclase domains have no catalytic activity, but when they are brought together, enzyme activity is restored. The active site is at the interface of the two domains. Both contribute substrate-binding residues, but the catalytic metal ions are bound exclusively via the N-terminal guanylate cyclase domain.</text>
</comment>
<comment type="PTM">
    <text evidence="3">Phosphorylated by PRKCD.</text>
</comment>
<comment type="disruption phenotype">
    <text evidence="9">Knockout Adcy7 homozygous mice die during embryogenesis (more than 93%). To obtain adult animals with Adcy7-deficient immune systems, the hematopoietic stem cells obtained from the rare adult Adcy7 homozygous mice are transplanted into lethally irradiated wild-type animals. All chimeric mice survived the transplant procedure and appeared healthy. Adcy7-deficient mice appear to be hypersensitive to lipopolysaccharide-induced endotoxic shock and display a higher mortality rate.</text>
</comment>
<comment type="similarity">
    <text evidence="5">Belongs to the adenylyl cyclase class-4/guanylyl cyclase family.</text>
</comment>
<gene>
    <name evidence="16" type="primary">Adcy7</name>
</gene>
<evidence type="ECO:0000250" key="1">
    <source>
        <dbReference type="UniProtKB" id="P26769"/>
    </source>
</evidence>
<evidence type="ECO:0000250" key="2">
    <source>
        <dbReference type="UniProtKB" id="P30803"/>
    </source>
</evidence>
<evidence type="ECO:0000250" key="3">
    <source>
        <dbReference type="UniProtKB" id="P51828"/>
    </source>
</evidence>
<evidence type="ECO:0000255" key="4"/>
<evidence type="ECO:0000255" key="5">
    <source>
        <dbReference type="PROSITE-ProRule" id="PRU00099"/>
    </source>
</evidence>
<evidence type="ECO:0000256" key="6">
    <source>
        <dbReference type="SAM" id="MobiDB-lite"/>
    </source>
</evidence>
<evidence type="ECO:0000269" key="7">
    <source>
    </source>
</evidence>
<evidence type="ECO:0000269" key="8">
    <source>
    </source>
</evidence>
<evidence type="ECO:0000269" key="9">
    <source>
    </source>
</evidence>
<evidence type="ECO:0000269" key="10">
    <source>
    </source>
</evidence>
<evidence type="ECO:0000269" key="11">
    <source>
    </source>
</evidence>
<evidence type="ECO:0000305" key="12"/>
<evidence type="ECO:0000305" key="13">
    <source>
    </source>
</evidence>
<evidence type="ECO:0000305" key="14">
    <source>
    </source>
</evidence>
<evidence type="ECO:0000305" key="15">
    <source>
    </source>
</evidence>
<evidence type="ECO:0000312" key="16">
    <source>
        <dbReference type="MGI" id="MGI:102891"/>
    </source>
</evidence>
<keyword id="KW-0067">ATP-binding</keyword>
<keyword id="KW-0115">cAMP biosynthesis</keyword>
<keyword id="KW-0325">Glycoprotein</keyword>
<keyword id="KW-0456">Lyase</keyword>
<keyword id="KW-0460">Magnesium</keyword>
<keyword id="KW-0464">Manganese</keyword>
<keyword id="KW-0472">Membrane</keyword>
<keyword id="KW-0479">Metal-binding</keyword>
<keyword id="KW-0547">Nucleotide-binding</keyword>
<keyword id="KW-1185">Reference proteome</keyword>
<keyword id="KW-0677">Repeat</keyword>
<keyword id="KW-0812">Transmembrane</keyword>
<keyword id="KW-1133">Transmembrane helix</keyword>
<accession>P51829</accession>
<accession>Q3U3P2</accession>
<feature type="chain" id="PRO_0000195704" description="Adenylate cyclase type 7">
    <location>
        <begin position="1"/>
        <end position="1099"/>
    </location>
</feature>
<feature type="topological domain" description="Cytoplasmic" evidence="4">
    <location>
        <begin position="1"/>
        <end position="33"/>
    </location>
</feature>
<feature type="transmembrane region" description="Helical" evidence="4">
    <location>
        <begin position="34"/>
        <end position="54"/>
    </location>
</feature>
<feature type="transmembrane region" description="Helical" evidence="4">
    <location>
        <begin position="63"/>
        <end position="83"/>
    </location>
</feature>
<feature type="transmembrane region" description="Helical" evidence="4">
    <location>
        <begin position="95"/>
        <end position="117"/>
    </location>
</feature>
<feature type="transmembrane region" description="Helical" evidence="4">
    <location>
        <begin position="122"/>
        <end position="142"/>
    </location>
</feature>
<feature type="transmembrane region" description="Helical" evidence="4">
    <location>
        <begin position="147"/>
        <end position="167"/>
    </location>
</feature>
<feature type="transmembrane region" description="Helical" evidence="4">
    <location>
        <begin position="178"/>
        <end position="198"/>
    </location>
</feature>
<feature type="topological domain" description="Cytoplasmic" evidence="4">
    <location>
        <begin position="199"/>
        <end position="595"/>
    </location>
</feature>
<feature type="transmembrane region" description="Helical" evidence="4">
    <location>
        <begin position="596"/>
        <end position="616"/>
    </location>
</feature>
<feature type="transmembrane region" description="Helical" evidence="4">
    <location>
        <begin position="621"/>
        <end position="641"/>
    </location>
</feature>
<feature type="transmembrane region" description="Helical" evidence="4">
    <location>
        <begin position="670"/>
        <end position="689"/>
    </location>
</feature>
<feature type="transmembrane region" description="Helical" evidence="4">
    <location>
        <begin position="719"/>
        <end position="738"/>
    </location>
</feature>
<feature type="transmembrane region" description="Helical" evidence="4">
    <location>
        <begin position="747"/>
        <end position="766"/>
    </location>
</feature>
<feature type="transmembrane region" description="Helical" evidence="4">
    <location>
        <begin position="813"/>
        <end position="833"/>
    </location>
</feature>
<feature type="topological domain" description="Cytoplasmic" evidence="4">
    <location>
        <begin position="834"/>
        <end position="1099"/>
    </location>
</feature>
<feature type="region of interest" description="Disordered" evidence="6">
    <location>
        <begin position="456"/>
        <end position="476"/>
    </location>
</feature>
<feature type="region of interest" description="Mediates regulation of adenylate cyclase activity by C5 alpha-induced G- beta and gamma pathway" evidence="3">
    <location>
        <begin position="479"/>
        <end position="484"/>
    </location>
</feature>
<feature type="region of interest" description="Mediates regulation of adenylate cyclase activity by sphingosine 1-phosphate-induced G alpha 13 pathway" evidence="3">
    <location>
        <begin position="493"/>
        <end position="501"/>
    </location>
</feature>
<feature type="region of interest" description="Disordered" evidence="6">
    <location>
        <begin position="504"/>
        <end position="543"/>
    </location>
</feature>
<feature type="region of interest" description="Modulates adenylate cyclase activity by modulating the binding of G(s)alpha to the high-affinity G(s)alpha binding site in 7C1a/7C2" evidence="3">
    <location>
        <begin position="508"/>
        <end position="585"/>
    </location>
</feature>
<feature type="compositionally biased region" description="Polar residues" evidence="6">
    <location>
        <begin position="508"/>
        <end position="518"/>
    </location>
</feature>
<feature type="compositionally biased region" description="Basic residues" evidence="6">
    <location>
        <begin position="519"/>
        <end position="531"/>
    </location>
</feature>
<feature type="binding site" evidence="2">
    <location>
        <begin position="286"/>
        <end position="291"/>
    </location>
    <ligand>
        <name>ATP</name>
        <dbReference type="ChEBI" id="CHEBI:30616"/>
    </ligand>
</feature>
<feature type="binding site" evidence="5">
    <location>
        <position position="286"/>
    </location>
    <ligand>
        <name>Mg(2+)</name>
        <dbReference type="ChEBI" id="CHEBI:18420"/>
        <label>1</label>
        <note>catalytic</note>
    </ligand>
</feature>
<feature type="binding site" evidence="5">
    <location>
        <position position="286"/>
    </location>
    <ligand>
        <name>Mg(2+)</name>
        <dbReference type="ChEBI" id="CHEBI:18420"/>
        <label>2</label>
        <note>catalytic</note>
    </ligand>
</feature>
<feature type="binding site" evidence="5">
    <location>
        <position position="287"/>
    </location>
    <ligand>
        <name>Mg(2+)</name>
        <dbReference type="ChEBI" id="CHEBI:18420"/>
        <label>2</label>
        <note>catalytic</note>
    </ligand>
</feature>
<feature type="binding site" evidence="2">
    <location>
        <begin position="328"/>
        <end position="330"/>
    </location>
    <ligand>
        <name>ATP</name>
        <dbReference type="ChEBI" id="CHEBI:30616"/>
    </ligand>
</feature>
<feature type="binding site" evidence="5">
    <location>
        <position position="330"/>
    </location>
    <ligand>
        <name>Mg(2+)</name>
        <dbReference type="ChEBI" id="CHEBI:18420"/>
        <label>1</label>
        <note>catalytic</note>
    </ligand>
</feature>
<feature type="binding site" evidence="5">
    <location>
        <position position="330"/>
    </location>
    <ligand>
        <name>Mg(2+)</name>
        <dbReference type="ChEBI" id="CHEBI:18420"/>
        <label>2</label>
        <note>catalytic</note>
    </ligand>
</feature>
<feature type="binding site" evidence="2">
    <location>
        <position position="374"/>
    </location>
    <ligand>
        <name>ATP</name>
        <dbReference type="ChEBI" id="CHEBI:30616"/>
    </ligand>
</feature>
<feature type="binding site" evidence="1">
    <location>
        <position position="950"/>
    </location>
    <ligand>
        <name>ATP</name>
        <dbReference type="ChEBI" id="CHEBI:30616"/>
    </ligand>
</feature>
<feature type="binding site" evidence="1">
    <location>
        <begin position="1029"/>
        <end position="1031"/>
    </location>
    <ligand>
        <name>ATP</name>
        <dbReference type="ChEBI" id="CHEBI:30616"/>
    </ligand>
</feature>
<feature type="binding site" evidence="1">
    <location>
        <begin position="1036"/>
        <end position="1040"/>
    </location>
    <ligand>
        <name>ATP</name>
        <dbReference type="ChEBI" id="CHEBI:30616"/>
    </ligand>
</feature>
<feature type="binding site" evidence="1">
    <location>
        <position position="1076"/>
    </location>
    <ligand>
        <name>ATP</name>
        <dbReference type="ChEBI" id="CHEBI:30616"/>
    </ligand>
</feature>
<feature type="glycosylation site" description="N-linked (GlcNAc...) asparagine" evidence="4">
    <location>
        <position position="702"/>
    </location>
</feature>
<feature type="sequence conflict" description="In Ref. 1; AAA57554." evidence="12" ref="1">
    <original>A</original>
    <variation>V</variation>
    <location>
        <position position="150"/>
    </location>
</feature>
<feature type="sequence conflict" description="In Ref. 1; AAA57554." evidence="12" ref="1">
    <original>C</original>
    <variation>Y</variation>
    <location>
        <position position="717"/>
    </location>
</feature>
<feature type="sequence conflict" description="In Ref. 1; AAA57554." evidence="12" ref="1">
    <original>R</original>
    <variation>Q</variation>
    <location>
        <position position="801"/>
    </location>
</feature>
<name>ADCY7_MOUSE</name>
<organism>
    <name type="scientific">Mus musculus</name>
    <name type="common">Mouse</name>
    <dbReference type="NCBI Taxonomy" id="10090"/>
    <lineage>
        <taxon>Eukaryota</taxon>
        <taxon>Metazoa</taxon>
        <taxon>Chordata</taxon>
        <taxon>Craniata</taxon>
        <taxon>Vertebrata</taxon>
        <taxon>Euteleostomi</taxon>
        <taxon>Mammalia</taxon>
        <taxon>Eutheria</taxon>
        <taxon>Euarchontoglires</taxon>
        <taxon>Glires</taxon>
        <taxon>Rodentia</taxon>
        <taxon>Myomorpha</taxon>
        <taxon>Muroidea</taxon>
        <taxon>Muridae</taxon>
        <taxon>Murinae</taxon>
        <taxon>Mus</taxon>
        <taxon>Mus</taxon>
    </lineage>
</organism>
<protein>
    <recommendedName>
        <fullName evidence="12">Adenylate cyclase type 7</fullName>
        <ecNumber evidence="15">4.6.1.1</ecNumber>
    </recommendedName>
    <alternativeName>
        <fullName>ATP pyrophosphate-lyase 7</fullName>
    </alternativeName>
    <alternativeName>
        <fullName>Adenylate cyclase type VII</fullName>
    </alternativeName>
    <alternativeName>
        <fullName>Adenylyl cyclase 7</fullName>
    </alternativeName>
</protein>